<comment type="function">
    <text evidence="1">Catalyzes the aminotransferase reaction from putrescine to 2-oxoglutarate, leading to glutamate and 4-aminobutanal, which spontaneously cyclizes to form 1-pyrroline. This is the first step in one of two pathways for putrescine degradation, where putrescine is converted into 4-aminobutanoate (gamma-aminobutyrate or GABA) via 4-aminobutanal. Also functions as a cadaverine transaminase in a a L-lysine degradation pathway to succinate that proceeds via cadaverine, glutarate and L-2-hydroxyglutarate.</text>
</comment>
<comment type="catalytic activity">
    <reaction evidence="1">
        <text>an alkane-alpha,omega-diamine + 2-oxoglutarate = an omega-aminoaldehyde + L-glutamate</text>
        <dbReference type="Rhea" id="RHEA:18217"/>
        <dbReference type="Rhea" id="RHEA-COMP:9766"/>
        <dbReference type="Rhea" id="RHEA-COMP:12750"/>
        <dbReference type="ChEBI" id="CHEBI:16810"/>
        <dbReference type="ChEBI" id="CHEBI:29985"/>
        <dbReference type="ChEBI" id="CHEBI:70977"/>
        <dbReference type="ChEBI" id="CHEBI:133427"/>
        <dbReference type="EC" id="2.6.1.29"/>
    </reaction>
    <physiologicalReaction direction="left-to-right" evidence="1">
        <dbReference type="Rhea" id="RHEA:18218"/>
    </physiologicalReaction>
</comment>
<comment type="catalytic activity">
    <reaction evidence="1">
        <text>putrescine + 2-oxoglutarate = 1-pyrroline + L-glutamate + H2O</text>
        <dbReference type="Rhea" id="RHEA:12268"/>
        <dbReference type="ChEBI" id="CHEBI:15377"/>
        <dbReference type="ChEBI" id="CHEBI:16810"/>
        <dbReference type="ChEBI" id="CHEBI:29985"/>
        <dbReference type="ChEBI" id="CHEBI:36781"/>
        <dbReference type="ChEBI" id="CHEBI:326268"/>
        <dbReference type="EC" id="2.6.1.82"/>
    </reaction>
    <physiologicalReaction direction="left-to-right" evidence="1">
        <dbReference type="Rhea" id="RHEA:12269"/>
    </physiologicalReaction>
</comment>
<comment type="catalytic activity">
    <reaction evidence="1">
        <text>cadaverine + 2-oxoglutarate = 5-aminopentanal + L-glutamate</text>
        <dbReference type="Rhea" id="RHEA:61624"/>
        <dbReference type="ChEBI" id="CHEBI:16810"/>
        <dbReference type="ChEBI" id="CHEBI:29985"/>
        <dbReference type="ChEBI" id="CHEBI:58384"/>
        <dbReference type="ChEBI" id="CHEBI:144896"/>
    </reaction>
    <physiologicalReaction direction="left-to-right" evidence="1">
        <dbReference type="Rhea" id="RHEA:61625"/>
    </physiologicalReaction>
</comment>
<comment type="cofactor">
    <cofactor evidence="1">
        <name>pyridoxal 5'-phosphate</name>
        <dbReference type="ChEBI" id="CHEBI:597326"/>
    </cofactor>
</comment>
<comment type="pathway">
    <text evidence="1">Amine and polyamine degradation; putrescine degradation; 4-aminobutanal from putrescine (transaminase route): step 1/1.</text>
</comment>
<comment type="similarity">
    <text evidence="1">Belongs to the class-III pyridoxal-phosphate-dependent aminotransferase family. Putrescine aminotransferase subfamily.</text>
</comment>
<gene>
    <name evidence="1" type="primary">patA</name>
    <name type="ordered locus">E2348C_3366</name>
</gene>
<sequence length="459" mass="49631">MNRLPSSASALACSAHALNLIEKRTLDHEEMKALNREVIEYFKEHVNPGFLEYRKSVTAGGDYGAVEWQAGGLNTLVDTQGQEFIDCLGGFGIFNVGHRNPVVVSAVQNQLAKQPLHSQELLDPLRAMLAKTLAALTPGKLKYSFFCNSGTESVEAALKLAKAYQSPRGKFTFIATSGAFHGKSLGALSATAKSTFRKPFMPLLPGFRHVPFGNIEAMRTALNECKKTGDDVAAVILEPIQGEGGVILPPPGYLTAVRKLCDEFGALMILDEVQTGMGRTGKMFACEHENVQPDILCLAKALGGGVMPIGATIATEEVFSVLFDNPFLHTTTFGGNPLACAAALATINVLLEQNLPAQAEQKGDMLLDGFRQLAREYPDLVQEARGKGMLMAIEFVDNEIGYNFASEMFRQRVLVAGTLNNAKTIRIEPPLTLTIEQCELVIKAARKALAAMRVSVEEA</sequence>
<keyword id="KW-0032">Aminotransferase</keyword>
<keyword id="KW-0663">Pyridoxal phosphate</keyword>
<keyword id="KW-1185">Reference proteome</keyword>
<keyword id="KW-0808">Transferase</keyword>
<dbReference type="EC" id="2.6.1.82" evidence="1"/>
<dbReference type="EC" id="2.6.1.29" evidence="1"/>
<dbReference type="EMBL" id="FM180568">
    <property type="protein sequence ID" value="CAS10914.1"/>
    <property type="molecule type" value="Genomic_DNA"/>
</dbReference>
<dbReference type="SMR" id="B7UIY0"/>
<dbReference type="KEGG" id="ecg:E2348C_3366"/>
<dbReference type="HOGENOM" id="CLU_016922_10_0_6"/>
<dbReference type="UniPathway" id="UPA00188">
    <property type="reaction ID" value="UER00290"/>
</dbReference>
<dbReference type="Proteomes" id="UP000008205">
    <property type="component" value="Chromosome"/>
</dbReference>
<dbReference type="GO" id="GO:0019161">
    <property type="term" value="F:diamine transaminase activity"/>
    <property type="evidence" value="ECO:0007669"/>
    <property type="project" value="UniProtKB-EC"/>
</dbReference>
<dbReference type="GO" id="GO:0042802">
    <property type="term" value="F:identical protein binding"/>
    <property type="evidence" value="ECO:0007669"/>
    <property type="project" value="TreeGrafter"/>
</dbReference>
<dbReference type="GO" id="GO:0033094">
    <property type="term" value="F:putrescine--2-oxoglutarate transaminase activity"/>
    <property type="evidence" value="ECO:0007669"/>
    <property type="project" value="UniProtKB-UniRule"/>
</dbReference>
<dbReference type="GO" id="GO:0030170">
    <property type="term" value="F:pyridoxal phosphate binding"/>
    <property type="evidence" value="ECO:0007669"/>
    <property type="project" value="UniProtKB-UniRule"/>
</dbReference>
<dbReference type="GO" id="GO:0019477">
    <property type="term" value="P:L-lysine catabolic process"/>
    <property type="evidence" value="ECO:0007669"/>
    <property type="project" value="UniProtKB-UniRule"/>
</dbReference>
<dbReference type="GO" id="GO:0009447">
    <property type="term" value="P:putrescine catabolic process"/>
    <property type="evidence" value="ECO:0007669"/>
    <property type="project" value="UniProtKB-UniRule"/>
</dbReference>
<dbReference type="CDD" id="cd00610">
    <property type="entry name" value="OAT_like"/>
    <property type="match status" value="1"/>
</dbReference>
<dbReference type="FunFam" id="3.40.640.10:FF:000004">
    <property type="entry name" value="Acetylornithine aminotransferase"/>
    <property type="match status" value="1"/>
</dbReference>
<dbReference type="Gene3D" id="3.90.1150.10">
    <property type="entry name" value="Aspartate Aminotransferase, domain 1"/>
    <property type="match status" value="1"/>
</dbReference>
<dbReference type="Gene3D" id="3.40.640.10">
    <property type="entry name" value="Type I PLP-dependent aspartate aminotransferase-like (Major domain)"/>
    <property type="match status" value="1"/>
</dbReference>
<dbReference type="HAMAP" id="MF_01276">
    <property type="entry name" value="Putres_aminotrans_3"/>
    <property type="match status" value="1"/>
</dbReference>
<dbReference type="InterPro" id="IPR005814">
    <property type="entry name" value="Aminotrans_3"/>
</dbReference>
<dbReference type="InterPro" id="IPR049704">
    <property type="entry name" value="Aminotrans_3_PPA_site"/>
</dbReference>
<dbReference type="InterPro" id="IPR050103">
    <property type="entry name" value="Class-III_PLP-dep_AT"/>
</dbReference>
<dbReference type="InterPro" id="IPR017747">
    <property type="entry name" value="Putrescine_aminotransferase"/>
</dbReference>
<dbReference type="InterPro" id="IPR015424">
    <property type="entry name" value="PyrdxlP-dep_Trfase"/>
</dbReference>
<dbReference type="InterPro" id="IPR015421">
    <property type="entry name" value="PyrdxlP-dep_Trfase_major"/>
</dbReference>
<dbReference type="InterPro" id="IPR015422">
    <property type="entry name" value="PyrdxlP-dep_Trfase_small"/>
</dbReference>
<dbReference type="NCBIfam" id="NF008570">
    <property type="entry name" value="PRK11522.1"/>
    <property type="match status" value="1"/>
</dbReference>
<dbReference type="NCBIfam" id="TIGR03372">
    <property type="entry name" value="putres_am_tran"/>
    <property type="match status" value="1"/>
</dbReference>
<dbReference type="PANTHER" id="PTHR11986">
    <property type="entry name" value="AMINOTRANSFERASE CLASS III"/>
    <property type="match status" value="1"/>
</dbReference>
<dbReference type="PANTHER" id="PTHR11986:SF112">
    <property type="entry name" value="PUTRESCINE AMINOTRANSFERASE"/>
    <property type="match status" value="1"/>
</dbReference>
<dbReference type="Pfam" id="PF00202">
    <property type="entry name" value="Aminotran_3"/>
    <property type="match status" value="1"/>
</dbReference>
<dbReference type="PIRSF" id="PIRSF000521">
    <property type="entry name" value="Transaminase_4ab_Lys_Orn"/>
    <property type="match status" value="1"/>
</dbReference>
<dbReference type="SUPFAM" id="SSF53383">
    <property type="entry name" value="PLP-dependent transferases"/>
    <property type="match status" value="1"/>
</dbReference>
<dbReference type="PROSITE" id="PS00600">
    <property type="entry name" value="AA_TRANSFER_CLASS_3"/>
    <property type="match status" value="1"/>
</dbReference>
<proteinExistence type="inferred from homology"/>
<name>PAT_ECO27</name>
<feature type="chain" id="PRO_0000379545" description="Putrescine aminotransferase">
    <location>
        <begin position="1"/>
        <end position="459"/>
    </location>
</feature>
<feature type="binding site" description="in other chain" evidence="1">
    <location>
        <begin position="150"/>
        <end position="151"/>
    </location>
    <ligand>
        <name>pyridoxal 5'-phosphate</name>
        <dbReference type="ChEBI" id="CHEBI:597326"/>
        <note>ligand shared between dimeric partners</note>
    </ligand>
</feature>
<feature type="binding site" description="in other chain" evidence="1">
    <location>
        <position position="274"/>
    </location>
    <ligand>
        <name>pyridoxal 5'-phosphate</name>
        <dbReference type="ChEBI" id="CHEBI:597326"/>
        <note>ligand shared between dimeric partners</note>
    </ligand>
</feature>
<feature type="binding site" evidence="1">
    <location>
        <position position="332"/>
    </location>
    <ligand>
        <name>pyridoxal 5'-phosphate</name>
        <dbReference type="ChEBI" id="CHEBI:597326"/>
        <note>ligand shared between dimeric partners</note>
    </ligand>
</feature>
<feature type="modified residue" description="N6-(pyridoxal phosphate)lysine" evidence="1">
    <location>
        <position position="300"/>
    </location>
</feature>
<evidence type="ECO:0000255" key="1">
    <source>
        <dbReference type="HAMAP-Rule" id="MF_01276"/>
    </source>
</evidence>
<accession>B7UIY0</accession>
<protein>
    <recommendedName>
        <fullName evidence="1">Putrescine aminotransferase</fullName>
        <shortName evidence="1">PAT</shortName>
        <shortName evidence="1">PATase</shortName>
        <ecNumber evidence="1">2.6.1.82</ecNumber>
    </recommendedName>
    <alternativeName>
        <fullName evidence="1">Cadaverine transaminase</fullName>
    </alternativeName>
    <alternativeName>
        <fullName evidence="1">Diamine transaminase</fullName>
        <ecNumber evidence="1">2.6.1.29</ecNumber>
    </alternativeName>
    <alternativeName>
        <fullName evidence="1">Putrescine transaminase</fullName>
    </alternativeName>
    <alternativeName>
        <fullName evidence="1">Putrescine--2-oxoglutaric acid transaminase</fullName>
    </alternativeName>
</protein>
<reference key="1">
    <citation type="journal article" date="2009" name="J. Bacteriol.">
        <title>Complete genome sequence and comparative genome analysis of enteropathogenic Escherichia coli O127:H6 strain E2348/69.</title>
        <authorList>
            <person name="Iguchi A."/>
            <person name="Thomson N.R."/>
            <person name="Ogura Y."/>
            <person name="Saunders D."/>
            <person name="Ooka T."/>
            <person name="Henderson I.R."/>
            <person name="Harris D."/>
            <person name="Asadulghani M."/>
            <person name="Kurokawa K."/>
            <person name="Dean P."/>
            <person name="Kenny B."/>
            <person name="Quail M.A."/>
            <person name="Thurston S."/>
            <person name="Dougan G."/>
            <person name="Hayashi T."/>
            <person name="Parkhill J."/>
            <person name="Frankel G."/>
        </authorList>
    </citation>
    <scope>NUCLEOTIDE SEQUENCE [LARGE SCALE GENOMIC DNA]</scope>
    <source>
        <strain>E2348/69 / EPEC</strain>
    </source>
</reference>
<organism>
    <name type="scientific">Escherichia coli O127:H6 (strain E2348/69 / EPEC)</name>
    <dbReference type="NCBI Taxonomy" id="574521"/>
    <lineage>
        <taxon>Bacteria</taxon>
        <taxon>Pseudomonadati</taxon>
        <taxon>Pseudomonadota</taxon>
        <taxon>Gammaproteobacteria</taxon>
        <taxon>Enterobacterales</taxon>
        <taxon>Enterobacteriaceae</taxon>
        <taxon>Escherichia</taxon>
    </lineage>
</organism>